<proteinExistence type="inferred from homology"/>
<comment type="function">
    <text evidence="1">RNA chaperone that binds small regulatory RNA (sRNAs) and mRNAs to facilitate mRNA translational regulation in response to envelope stress, environmental stress and changes in metabolite concentrations. Also binds with high specificity to tRNAs.</text>
</comment>
<comment type="subunit">
    <text evidence="1">Homohexamer.</text>
</comment>
<comment type="similarity">
    <text evidence="1">Belongs to the Hfq family.</text>
</comment>
<reference key="1">
    <citation type="journal article" date="2009" name="PLoS Genet.">
        <title>Organised genome dynamics in the Escherichia coli species results in highly diverse adaptive paths.</title>
        <authorList>
            <person name="Touchon M."/>
            <person name="Hoede C."/>
            <person name="Tenaillon O."/>
            <person name="Barbe V."/>
            <person name="Baeriswyl S."/>
            <person name="Bidet P."/>
            <person name="Bingen E."/>
            <person name="Bonacorsi S."/>
            <person name="Bouchier C."/>
            <person name="Bouvet O."/>
            <person name="Calteau A."/>
            <person name="Chiapello H."/>
            <person name="Clermont O."/>
            <person name="Cruveiller S."/>
            <person name="Danchin A."/>
            <person name="Diard M."/>
            <person name="Dossat C."/>
            <person name="Karoui M.E."/>
            <person name="Frapy E."/>
            <person name="Garry L."/>
            <person name="Ghigo J.M."/>
            <person name="Gilles A.M."/>
            <person name="Johnson J."/>
            <person name="Le Bouguenec C."/>
            <person name="Lescat M."/>
            <person name="Mangenot S."/>
            <person name="Martinez-Jehanne V."/>
            <person name="Matic I."/>
            <person name="Nassif X."/>
            <person name="Oztas S."/>
            <person name="Petit M.A."/>
            <person name="Pichon C."/>
            <person name="Rouy Z."/>
            <person name="Ruf C.S."/>
            <person name="Schneider D."/>
            <person name="Tourret J."/>
            <person name="Vacherie B."/>
            <person name="Vallenet D."/>
            <person name="Medigue C."/>
            <person name="Rocha E.P.C."/>
            <person name="Denamur E."/>
        </authorList>
    </citation>
    <scope>NUCLEOTIDE SEQUENCE [LARGE SCALE GENOMIC DNA]</scope>
    <source>
        <strain>ATCC 35469 / DSM 13698 / BCRC 15582 / CCUG 18766 / IAM 14443 / JCM 21226 / LMG 7866 / NBRC 102419 / NCTC 12128 / CDC 0568-73</strain>
    </source>
</reference>
<protein>
    <recommendedName>
        <fullName evidence="1">RNA-binding protein Hfq</fullName>
    </recommendedName>
</protein>
<sequence length="102" mass="11166">MAKGQSLQDPFLNALRRERVPVSIYLVNGIKLQGQIESFDQFVILLKNTVSQMVYKHAISTVVPSRPVSHHSNNAGGGTSSNYHHGSSAQNTSAQQDSEETE</sequence>
<name>HFQ_ESCF3</name>
<organism>
    <name type="scientific">Escherichia fergusonii (strain ATCC 35469 / DSM 13698 / CCUG 18766 / IAM 14443 / JCM 21226 / LMG 7866 / NBRC 102419 / NCTC 12128 / CDC 0568-73)</name>
    <dbReference type="NCBI Taxonomy" id="585054"/>
    <lineage>
        <taxon>Bacteria</taxon>
        <taxon>Pseudomonadati</taxon>
        <taxon>Pseudomonadota</taxon>
        <taxon>Gammaproteobacteria</taxon>
        <taxon>Enterobacterales</taxon>
        <taxon>Enterobacteriaceae</taxon>
        <taxon>Escherichia</taxon>
    </lineage>
</organism>
<evidence type="ECO:0000255" key="1">
    <source>
        <dbReference type="HAMAP-Rule" id="MF_00436"/>
    </source>
</evidence>
<evidence type="ECO:0000255" key="2">
    <source>
        <dbReference type="PROSITE-ProRule" id="PRU01346"/>
    </source>
</evidence>
<evidence type="ECO:0000256" key="3">
    <source>
        <dbReference type="SAM" id="MobiDB-lite"/>
    </source>
</evidence>
<dbReference type="EMBL" id="CU928158">
    <property type="protein sequence ID" value="CAQ91644.1"/>
    <property type="molecule type" value="Genomic_DNA"/>
</dbReference>
<dbReference type="RefSeq" id="WP_001051883.1">
    <property type="nucleotide sequence ID" value="NC_011740.1"/>
</dbReference>
<dbReference type="SMR" id="B7LLV4"/>
<dbReference type="GeneID" id="93777649"/>
<dbReference type="KEGG" id="efe:EFER_4225"/>
<dbReference type="HOGENOM" id="CLU_113688_2_1_6"/>
<dbReference type="OrthoDB" id="9799751at2"/>
<dbReference type="Proteomes" id="UP000000745">
    <property type="component" value="Chromosome"/>
</dbReference>
<dbReference type="GO" id="GO:0005829">
    <property type="term" value="C:cytosol"/>
    <property type="evidence" value="ECO:0007669"/>
    <property type="project" value="TreeGrafter"/>
</dbReference>
<dbReference type="GO" id="GO:0003723">
    <property type="term" value="F:RNA binding"/>
    <property type="evidence" value="ECO:0007669"/>
    <property type="project" value="UniProtKB-UniRule"/>
</dbReference>
<dbReference type="GO" id="GO:0006355">
    <property type="term" value="P:regulation of DNA-templated transcription"/>
    <property type="evidence" value="ECO:0007669"/>
    <property type="project" value="InterPro"/>
</dbReference>
<dbReference type="GO" id="GO:0043487">
    <property type="term" value="P:regulation of RNA stability"/>
    <property type="evidence" value="ECO:0007669"/>
    <property type="project" value="TreeGrafter"/>
</dbReference>
<dbReference type="GO" id="GO:0045974">
    <property type="term" value="P:regulation of translation, ncRNA-mediated"/>
    <property type="evidence" value="ECO:0007669"/>
    <property type="project" value="TreeGrafter"/>
</dbReference>
<dbReference type="CDD" id="cd01716">
    <property type="entry name" value="Hfq"/>
    <property type="match status" value="1"/>
</dbReference>
<dbReference type="FunFam" id="2.30.30.100:FF:000001">
    <property type="entry name" value="RNA-binding protein Hfq"/>
    <property type="match status" value="1"/>
</dbReference>
<dbReference type="Gene3D" id="2.30.30.100">
    <property type="match status" value="1"/>
</dbReference>
<dbReference type="HAMAP" id="MF_00436">
    <property type="entry name" value="Hfq"/>
    <property type="match status" value="1"/>
</dbReference>
<dbReference type="InterPro" id="IPR005001">
    <property type="entry name" value="Hfq"/>
</dbReference>
<dbReference type="InterPro" id="IPR010920">
    <property type="entry name" value="LSM_dom_sf"/>
</dbReference>
<dbReference type="InterPro" id="IPR047575">
    <property type="entry name" value="Sm"/>
</dbReference>
<dbReference type="NCBIfam" id="TIGR02383">
    <property type="entry name" value="Hfq"/>
    <property type="match status" value="1"/>
</dbReference>
<dbReference type="NCBIfam" id="NF001602">
    <property type="entry name" value="PRK00395.1"/>
    <property type="match status" value="1"/>
</dbReference>
<dbReference type="PANTHER" id="PTHR34772">
    <property type="entry name" value="RNA-BINDING PROTEIN HFQ"/>
    <property type="match status" value="1"/>
</dbReference>
<dbReference type="PANTHER" id="PTHR34772:SF1">
    <property type="entry name" value="RNA-BINDING PROTEIN HFQ"/>
    <property type="match status" value="1"/>
</dbReference>
<dbReference type="Pfam" id="PF17209">
    <property type="entry name" value="Hfq"/>
    <property type="match status" value="1"/>
</dbReference>
<dbReference type="SUPFAM" id="SSF50182">
    <property type="entry name" value="Sm-like ribonucleoproteins"/>
    <property type="match status" value="1"/>
</dbReference>
<dbReference type="PROSITE" id="PS52002">
    <property type="entry name" value="SM"/>
    <property type="match status" value="1"/>
</dbReference>
<gene>
    <name evidence="1" type="primary">hfq</name>
    <name type="ordered locus">EFER_4225</name>
</gene>
<accession>B7LLV4</accession>
<feature type="chain" id="PRO_1000190331" description="RNA-binding protein Hfq">
    <location>
        <begin position="1"/>
        <end position="102"/>
    </location>
</feature>
<feature type="domain" description="Sm" evidence="2">
    <location>
        <begin position="9"/>
        <end position="68"/>
    </location>
</feature>
<feature type="region of interest" description="Disordered" evidence="3">
    <location>
        <begin position="63"/>
        <end position="102"/>
    </location>
</feature>
<feature type="compositionally biased region" description="Polar residues" evidence="3">
    <location>
        <begin position="70"/>
        <end position="96"/>
    </location>
</feature>
<keyword id="KW-0694">RNA-binding</keyword>
<keyword id="KW-0346">Stress response</keyword>